<dbReference type="EMBL" id="BA000011">
    <property type="protein sequence ID" value="BAB60567.1"/>
    <property type="molecule type" value="Genomic_DNA"/>
</dbReference>
<dbReference type="RefSeq" id="WP_010917657.1">
    <property type="nucleotide sequence ID" value="NC_002689.2"/>
</dbReference>
<dbReference type="PDB" id="2RFM">
    <property type="method" value="X-ray"/>
    <property type="resolution" value="1.65 A"/>
    <property type="chains" value="A/B=1-189"/>
</dbReference>
<dbReference type="PDBsum" id="2RFM"/>
<dbReference type="SMR" id="Q978J0"/>
<dbReference type="STRING" id="273116.gene:9382234"/>
<dbReference type="PaxDb" id="273116-14325664"/>
<dbReference type="GeneID" id="1442115"/>
<dbReference type="KEGG" id="tvo:TVG1472127"/>
<dbReference type="eggNOG" id="arCOG04004">
    <property type="taxonomic scope" value="Archaea"/>
</dbReference>
<dbReference type="HOGENOM" id="CLU_000134_18_1_2"/>
<dbReference type="OrthoDB" id="56560at2157"/>
<dbReference type="PhylomeDB" id="Q978J0"/>
<dbReference type="EvolutionaryTrace" id="Q978J0"/>
<dbReference type="Proteomes" id="UP000001017">
    <property type="component" value="Chromosome"/>
</dbReference>
<dbReference type="Gene3D" id="1.25.40.20">
    <property type="entry name" value="Ankyrin repeat-containing domain"/>
    <property type="match status" value="1"/>
</dbReference>
<dbReference type="InterPro" id="IPR002110">
    <property type="entry name" value="Ankyrin_rpt"/>
</dbReference>
<dbReference type="InterPro" id="IPR036770">
    <property type="entry name" value="Ankyrin_rpt-contain_sf"/>
</dbReference>
<dbReference type="PANTHER" id="PTHR24171">
    <property type="entry name" value="ANKYRIN REPEAT DOMAIN-CONTAINING PROTEIN 39-RELATED"/>
    <property type="match status" value="1"/>
</dbReference>
<dbReference type="Pfam" id="PF12796">
    <property type="entry name" value="Ank_2"/>
    <property type="match status" value="2"/>
</dbReference>
<dbReference type="SMART" id="SM00248">
    <property type="entry name" value="ANK"/>
    <property type="match status" value="4"/>
</dbReference>
<dbReference type="SUPFAM" id="SSF48403">
    <property type="entry name" value="Ankyrin repeat"/>
    <property type="match status" value="1"/>
</dbReference>
<dbReference type="PROSITE" id="PS50297">
    <property type="entry name" value="ANK_REP_REGION"/>
    <property type="match status" value="1"/>
</dbReference>
<dbReference type="PROSITE" id="PS50088">
    <property type="entry name" value="ANK_REPEAT"/>
    <property type="match status" value="3"/>
</dbReference>
<gene>
    <name type="ordered locus">TV1425</name>
    <name type="ORF">TVG1472127</name>
</gene>
<accession>Q978J0</accession>
<sequence>MDKNGEIVEKIKDEKSINQNLDFLRNYRDSYNRTPLMVACMLGMENAIDKLVENFDKLEDKDIEGSTALIWAVKNNRLGIAEKLLSKGSNVNTKDFSGKTPLMWSIIFGYSEMSYFLLEHGANVNDRNLEGETPLIVASKYGRSEIVKKLLELGADISARDLTGLTAEASARIFGRQEVIKIFTEVRRA</sequence>
<evidence type="ECO:0007829" key="1">
    <source>
        <dbReference type="PDB" id="2RFM"/>
    </source>
</evidence>
<organism>
    <name type="scientific">Thermoplasma volcanium (strain ATCC 51530 / DSM 4299 / JCM 9571 / NBRC 15438 / GSS1)</name>
    <dbReference type="NCBI Taxonomy" id="273116"/>
    <lineage>
        <taxon>Archaea</taxon>
        <taxon>Methanobacteriati</taxon>
        <taxon>Thermoplasmatota</taxon>
        <taxon>Thermoplasmata</taxon>
        <taxon>Thermoplasmatales</taxon>
        <taxon>Thermoplasmataceae</taxon>
        <taxon>Thermoplasma</taxon>
    </lineage>
</organism>
<protein>
    <recommendedName>
        <fullName>Putative ankyrin repeat protein TV1425</fullName>
    </recommendedName>
</protein>
<name>Y1425_THEVO</name>
<reference key="1">
    <citation type="journal article" date="2000" name="Proc. Natl. Acad. Sci. U.S.A.">
        <title>Archaeal adaptation to higher temperatures revealed by genomic sequence of Thermoplasma volcanium.</title>
        <authorList>
            <person name="Kawashima T."/>
            <person name="Amano N."/>
            <person name="Koike H."/>
            <person name="Makino S."/>
            <person name="Higuchi S."/>
            <person name="Kawashima-Ohya Y."/>
            <person name="Watanabe K."/>
            <person name="Yamazaki M."/>
            <person name="Kanehori K."/>
            <person name="Kawamoto T."/>
            <person name="Nunoshiba T."/>
            <person name="Yamamoto Y."/>
            <person name="Aramaki H."/>
            <person name="Makino K."/>
            <person name="Suzuki M."/>
        </authorList>
    </citation>
    <scope>NUCLEOTIDE SEQUENCE [LARGE SCALE GENOMIC DNA]</scope>
    <source>
        <strain>ATCC 51530 / DSM 4299 / JCM 9571 / NBRC 15438 / GSS1</strain>
    </source>
</reference>
<keyword id="KW-0002">3D-structure</keyword>
<keyword id="KW-0040">ANK repeat</keyword>
<keyword id="KW-0677">Repeat</keyword>
<proteinExistence type="evidence at protein level"/>
<feature type="chain" id="PRO_0000067234" description="Putative ankyrin repeat protein TV1425">
    <location>
        <begin position="1"/>
        <end position="189"/>
    </location>
</feature>
<feature type="repeat" description="ANK 1">
    <location>
        <begin position="31"/>
        <end position="60"/>
    </location>
</feature>
<feature type="repeat" description="ANK 2">
    <location>
        <begin position="64"/>
        <end position="93"/>
    </location>
</feature>
<feature type="repeat" description="ANK 3">
    <location>
        <begin position="97"/>
        <end position="126"/>
    </location>
</feature>
<feature type="repeat" description="ANK 4">
    <location>
        <begin position="130"/>
        <end position="159"/>
    </location>
</feature>
<feature type="helix" evidence="1">
    <location>
        <begin position="8"/>
        <end position="11"/>
    </location>
</feature>
<feature type="helix" evidence="1">
    <location>
        <begin position="14"/>
        <end position="19"/>
    </location>
</feature>
<feature type="helix" evidence="1">
    <location>
        <begin position="21"/>
        <end position="25"/>
    </location>
</feature>
<feature type="helix" evidence="1">
    <location>
        <begin position="35"/>
        <end position="42"/>
    </location>
</feature>
<feature type="helix" evidence="1">
    <location>
        <begin position="45"/>
        <end position="47"/>
    </location>
</feature>
<feature type="helix" evidence="1">
    <location>
        <begin position="48"/>
        <end position="55"/>
    </location>
</feature>
<feature type="helix" evidence="1">
    <location>
        <begin position="68"/>
        <end position="74"/>
    </location>
</feature>
<feature type="helix" evidence="1">
    <location>
        <begin position="78"/>
        <end position="87"/>
    </location>
</feature>
<feature type="helix" evidence="1">
    <location>
        <begin position="101"/>
        <end position="108"/>
    </location>
</feature>
<feature type="helix" evidence="1">
    <location>
        <begin position="111"/>
        <end position="119"/>
    </location>
</feature>
<feature type="helix" evidence="1">
    <location>
        <begin position="134"/>
        <end position="141"/>
    </location>
</feature>
<feature type="helix" evidence="1">
    <location>
        <begin position="144"/>
        <end position="152"/>
    </location>
</feature>
<feature type="helix" evidence="1">
    <location>
        <begin position="167"/>
        <end position="173"/>
    </location>
</feature>
<feature type="helix" evidence="1">
    <location>
        <begin position="177"/>
        <end position="188"/>
    </location>
</feature>